<comment type="function">
    <text evidence="1">Probable core component of the endosomal sorting required for transport complex III (ESCRT-III) which is involved in multivesicular bodies (MVBs) formation and sorting of endosomal cargo proteins into MVBs. MVBs contain intraluminal vesicles (ILVs) that are generated by invagination and scission from the limiting membrane of the endosome and mostly are delivered to lysosomes enabling degradation of membrane proteins, such as stimulated growth factor receptors, lysosomal enzymes and lipids (By similarity).</text>
</comment>
<comment type="subunit">
    <text evidence="1">Probable core component of the endosomal sorting required for transport complex III (ESCRT-III). ESCRT-III components are thought to multimerize to form a flat lattice on the perimeter membrane of the endosome (By similarity).</text>
</comment>
<comment type="subcellular location">
    <subcellularLocation>
        <location evidence="1">Cytoplasm</location>
        <location evidence="1">Cytosol</location>
    </subcellularLocation>
    <subcellularLocation>
        <location evidence="1">Late endosome membrane</location>
        <topology evidence="1">Peripheral membrane protein</topology>
    </subcellularLocation>
    <subcellularLocation>
        <location evidence="1">Midbody</location>
    </subcellularLocation>
</comment>
<comment type="similarity">
    <text evidence="4">Belongs to the SNF7 family.</text>
</comment>
<protein>
    <recommendedName>
        <fullName>Charged multivesicular body protein 4b</fullName>
    </recommendedName>
    <alternativeName>
        <fullName>Chromatin-modifying protein 4b</fullName>
        <shortName>CHMP4b</shortName>
    </alternativeName>
</protein>
<proteinExistence type="evidence at transcript level"/>
<keyword id="KW-0175">Coiled coil</keyword>
<keyword id="KW-0963">Cytoplasm</keyword>
<keyword id="KW-0967">Endosome</keyword>
<keyword id="KW-0472">Membrane</keyword>
<keyword id="KW-0653">Protein transport</keyword>
<keyword id="KW-1185">Reference proteome</keyword>
<keyword id="KW-0813">Transport</keyword>
<sequence length="222" mass="24849">MSLIGKLFGTGGKGAKGPSPQEAIQKLRDTEEMLAKKQEFLEKKIEQELVTAKKHGTKNKRAALQALKRKKRYEKQLAQIDGTLSTIEFQREALENANTNTEVLKNMGFAAKAMKAAHDNMDIEKVDELMQDIADQQELAQEISDAISKPVGFGEDFDEDELMAELEELEQEELDKNLLEVQGPETVPLPNVPAASLPAKPVKKKQEEDDDDMRELENWATA</sequence>
<name>CHM4B_XENLA</name>
<gene>
    <name type="primary">chmp4b</name>
</gene>
<feature type="chain" id="PRO_0000211493" description="Charged multivesicular body protein 4b">
    <location>
        <begin position="1"/>
        <end position="222"/>
    </location>
</feature>
<feature type="region of interest" description="Disordered" evidence="3">
    <location>
        <begin position="1"/>
        <end position="21"/>
    </location>
</feature>
<feature type="region of interest" description="Disordered" evidence="3">
    <location>
        <begin position="177"/>
        <end position="222"/>
    </location>
</feature>
<feature type="coiled-coil region" evidence="2">
    <location>
        <begin position="21"/>
        <end position="182"/>
    </location>
</feature>
<accession>Q5XGW6</accession>
<dbReference type="EMBL" id="BC084312">
    <property type="protein sequence ID" value="AAH84312.1"/>
    <property type="molecule type" value="mRNA"/>
</dbReference>
<dbReference type="RefSeq" id="NP_001088290.1">
    <property type="nucleotide sequence ID" value="NM_001094821.1"/>
</dbReference>
<dbReference type="SMR" id="Q5XGW6"/>
<dbReference type="DNASU" id="495125"/>
<dbReference type="GeneID" id="495125"/>
<dbReference type="KEGG" id="xla:495125"/>
<dbReference type="AGR" id="Xenbase:XB-GENE-6077842"/>
<dbReference type="CTD" id="495125"/>
<dbReference type="Xenbase" id="XB-GENE-6077842">
    <property type="gene designation" value="chmp4b.L"/>
</dbReference>
<dbReference type="OrthoDB" id="5592979at2759"/>
<dbReference type="CD-CODE" id="78E86D56">
    <property type="entry name" value="Mitochondrial cloud"/>
</dbReference>
<dbReference type="Proteomes" id="UP000186698">
    <property type="component" value="Chromosome 9_10L"/>
</dbReference>
<dbReference type="Bgee" id="495125">
    <property type="expression patterns" value="Expressed in muscle tissue and 19 other cell types or tissues"/>
</dbReference>
<dbReference type="GO" id="GO:0009898">
    <property type="term" value="C:cytoplasmic side of plasma membrane"/>
    <property type="evidence" value="ECO:0000318"/>
    <property type="project" value="GO_Central"/>
</dbReference>
<dbReference type="GO" id="GO:0005829">
    <property type="term" value="C:cytosol"/>
    <property type="evidence" value="ECO:0007669"/>
    <property type="project" value="UniProtKB-SubCell"/>
</dbReference>
<dbReference type="GO" id="GO:0000815">
    <property type="term" value="C:ESCRT III complex"/>
    <property type="evidence" value="ECO:0000250"/>
    <property type="project" value="UniProtKB"/>
</dbReference>
<dbReference type="GO" id="GO:0031902">
    <property type="term" value="C:late endosome membrane"/>
    <property type="evidence" value="ECO:0007669"/>
    <property type="project" value="UniProtKB-SubCell"/>
</dbReference>
<dbReference type="GO" id="GO:0030496">
    <property type="term" value="C:midbody"/>
    <property type="evidence" value="ECO:0007669"/>
    <property type="project" value="UniProtKB-SubCell"/>
</dbReference>
<dbReference type="GO" id="GO:0005771">
    <property type="term" value="C:multivesicular body"/>
    <property type="evidence" value="ECO:0000318"/>
    <property type="project" value="GO_Central"/>
</dbReference>
<dbReference type="GO" id="GO:0005635">
    <property type="term" value="C:nuclear envelope"/>
    <property type="evidence" value="ECO:0000250"/>
    <property type="project" value="UniProtKB"/>
</dbReference>
<dbReference type="GO" id="GO:0010458">
    <property type="term" value="P:exit from mitosis"/>
    <property type="evidence" value="ECO:0000250"/>
    <property type="project" value="UniProtKB"/>
</dbReference>
<dbReference type="GO" id="GO:0032511">
    <property type="term" value="P:late endosome to vacuole transport via multivesicular body sorting pathway"/>
    <property type="evidence" value="ECO:0000318"/>
    <property type="project" value="GO_Central"/>
</dbReference>
<dbReference type="GO" id="GO:0090148">
    <property type="term" value="P:membrane fission"/>
    <property type="evidence" value="ECO:0000250"/>
    <property type="project" value="UniProtKB"/>
</dbReference>
<dbReference type="GO" id="GO:0000281">
    <property type="term" value="P:mitotic cytokinesis"/>
    <property type="evidence" value="ECO:0000250"/>
    <property type="project" value="UniProtKB"/>
</dbReference>
<dbReference type="GO" id="GO:0031468">
    <property type="term" value="P:nuclear membrane reassembly"/>
    <property type="evidence" value="ECO:0000250"/>
    <property type="project" value="UniProtKB"/>
</dbReference>
<dbReference type="GO" id="GO:0015031">
    <property type="term" value="P:protein transport"/>
    <property type="evidence" value="ECO:0007669"/>
    <property type="project" value="UniProtKB-KW"/>
</dbReference>
<dbReference type="GO" id="GO:0006900">
    <property type="term" value="P:vesicle budding from membrane"/>
    <property type="evidence" value="ECO:0000318"/>
    <property type="project" value="GO_Central"/>
</dbReference>
<dbReference type="FunFam" id="1.10.287.1060:FF:000001">
    <property type="entry name" value="Charged multivesicular body protein 4b"/>
    <property type="match status" value="1"/>
</dbReference>
<dbReference type="Gene3D" id="6.10.250.1710">
    <property type="match status" value="1"/>
</dbReference>
<dbReference type="Gene3D" id="1.10.287.1060">
    <property type="entry name" value="ESAT-6-like"/>
    <property type="match status" value="1"/>
</dbReference>
<dbReference type="InterPro" id="IPR005024">
    <property type="entry name" value="Snf7_fam"/>
</dbReference>
<dbReference type="PANTHER" id="PTHR22761">
    <property type="entry name" value="CHARGED MULTIVESICULAR BODY PROTEIN"/>
    <property type="match status" value="1"/>
</dbReference>
<dbReference type="PANTHER" id="PTHR22761:SF4">
    <property type="entry name" value="CHARGED MULTIVESICULAR BODY PROTEIN 4B"/>
    <property type="match status" value="1"/>
</dbReference>
<dbReference type="Pfam" id="PF03357">
    <property type="entry name" value="Snf7"/>
    <property type="match status" value="1"/>
</dbReference>
<evidence type="ECO:0000250" key="1">
    <source>
        <dbReference type="UniProtKB" id="Q9H444"/>
    </source>
</evidence>
<evidence type="ECO:0000255" key="2"/>
<evidence type="ECO:0000256" key="3">
    <source>
        <dbReference type="SAM" id="MobiDB-lite"/>
    </source>
</evidence>
<evidence type="ECO:0000305" key="4"/>
<reference key="1">
    <citation type="submission" date="2004-10" db="EMBL/GenBank/DDBJ databases">
        <authorList>
            <consortium name="NIH - Xenopus Gene Collection (XGC) project"/>
        </authorList>
    </citation>
    <scope>NUCLEOTIDE SEQUENCE [LARGE SCALE MRNA]</scope>
    <source>
        <tissue>Embryo</tissue>
    </source>
</reference>
<organism>
    <name type="scientific">Xenopus laevis</name>
    <name type="common">African clawed frog</name>
    <dbReference type="NCBI Taxonomy" id="8355"/>
    <lineage>
        <taxon>Eukaryota</taxon>
        <taxon>Metazoa</taxon>
        <taxon>Chordata</taxon>
        <taxon>Craniata</taxon>
        <taxon>Vertebrata</taxon>
        <taxon>Euteleostomi</taxon>
        <taxon>Amphibia</taxon>
        <taxon>Batrachia</taxon>
        <taxon>Anura</taxon>
        <taxon>Pipoidea</taxon>
        <taxon>Pipidae</taxon>
        <taxon>Xenopodinae</taxon>
        <taxon>Xenopus</taxon>
        <taxon>Xenopus</taxon>
    </lineage>
</organism>